<evidence type="ECO:0000255" key="1">
    <source>
        <dbReference type="HAMAP-Rule" id="MF_04066"/>
    </source>
</evidence>
<evidence type="ECO:0000256" key="2">
    <source>
        <dbReference type="SAM" id="MobiDB-lite"/>
    </source>
</evidence>
<protein>
    <recommendedName>
        <fullName evidence="1">Non-structural protein 1</fullName>
        <shortName evidence="1">NS1</shortName>
    </recommendedName>
    <alternativeName>
        <fullName evidence="1">NS1A</fullName>
    </alternativeName>
</protein>
<keyword id="KW-0025">Alternative splicing</keyword>
<keyword id="KW-1262">Eukaryotic host gene expression shutoff by virus</keyword>
<keyword id="KW-1035">Host cytoplasm</keyword>
<keyword id="KW-1190">Host gene expression shutoff by virus</keyword>
<keyword id="KW-1192">Host mRNA suppression by virus</keyword>
<keyword id="KW-1048">Host nucleus</keyword>
<keyword id="KW-0945">Host-virus interaction</keyword>
<keyword id="KW-1090">Inhibition of host innate immune response by virus</keyword>
<keyword id="KW-1114">Inhibition of host interferon signaling pathway by virus</keyword>
<keyword id="KW-1102">Inhibition of host PKR by virus</keyword>
<keyword id="KW-1103">Inhibition of host pre-mRNA processing by virus</keyword>
<keyword id="KW-1088">Inhibition of host RIG-I by virus</keyword>
<keyword id="KW-1113">Inhibition of host RLR pathway by virus</keyword>
<keyword id="KW-0922">Interferon antiviral system evasion</keyword>
<keyword id="KW-0694">RNA-binding</keyword>
<keyword id="KW-0832">Ubl conjugation</keyword>
<keyword id="KW-0899">Viral immunoevasion</keyword>
<gene>
    <name evidence="1" type="primary">NS</name>
</gene>
<sequence length="227" mass="25752">NTVSSFQVDCFLWHVRKRFADQELGDAPFLDRLRRDQKSLRGRGSTLGLDIETATRAGKQIVERILVEESDEALKMTIVSMPASRYLTDMTLEEMSRDWFMLMPKQKVAGSLCIRMDQAIMDKNIILKANFSVISDRLETLILLRAFTEEGAIVGEISPLPSLPGHTDEDVKNAIGDLIGGLEWNDNTVRVSETLQRFAWRSSNEDGRPLLPPKQKRKMARTIESEV</sequence>
<organism>
    <name type="scientific">Influenza A virus (strain A/Tern/South Africa/1961 H5N3)</name>
    <dbReference type="NCBI Taxonomy" id="384510"/>
    <lineage>
        <taxon>Viruses</taxon>
        <taxon>Riboviria</taxon>
        <taxon>Orthornavirae</taxon>
        <taxon>Negarnaviricota</taxon>
        <taxon>Polyploviricotina</taxon>
        <taxon>Insthoviricetes</taxon>
        <taxon>Articulavirales</taxon>
        <taxon>Orthomyxoviridae</taxon>
        <taxon>Alphainfluenzavirus</taxon>
        <taxon>Alphainfluenzavirus influenzae</taxon>
        <taxon>Influenza A virus</taxon>
    </lineage>
</organism>
<dbReference type="EMBL" id="M16564">
    <property type="protein sequence ID" value="AAA43572.1"/>
    <property type="molecule type" value="Genomic_RNA"/>
</dbReference>
<dbReference type="SMR" id="P08278"/>
<dbReference type="Proteomes" id="UP000101256">
    <property type="component" value="Genome"/>
</dbReference>
<dbReference type="GO" id="GO:0030430">
    <property type="term" value="C:host cell cytoplasm"/>
    <property type="evidence" value="ECO:0007669"/>
    <property type="project" value="UniProtKB-SubCell"/>
</dbReference>
<dbReference type="GO" id="GO:0042025">
    <property type="term" value="C:host cell nucleus"/>
    <property type="evidence" value="ECO:0007669"/>
    <property type="project" value="UniProtKB-SubCell"/>
</dbReference>
<dbReference type="GO" id="GO:0030291">
    <property type="term" value="F:protein serine/threonine kinase inhibitor activity"/>
    <property type="evidence" value="ECO:0007669"/>
    <property type="project" value="UniProtKB-KW"/>
</dbReference>
<dbReference type="GO" id="GO:0003723">
    <property type="term" value="F:RNA binding"/>
    <property type="evidence" value="ECO:0007669"/>
    <property type="project" value="UniProtKB-KW"/>
</dbReference>
<dbReference type="GO" id="GO:0039540">
    <property type="term" value="P:symbiont-mediated suppression of host cytoplasmic pattern recognition receptor signaling pathway via inhibition of RIG-I activity"/>
    <property type="evidence" value="ECO:0007669"/>
    <property type="project" value="UniProtKB-KW"/>
</dbReference>
<dbReference type="GO" id="GO:0039657">
    <property type="term" value="P:symbiont-mediated suppression of host gene expression"/>
    <property type="evidence" value="ECO:0007669"/>
    <property type="project" value="UniProtKB-KW"/>
</dbReference>
<dbReference type="GO" id="GO:0039524">
    <property type="term" value="P:symbiont-mediated suppression of host mRNA processing"/>
    <property type="evidence" value="ECO:0007669"/>
    <property type="project" value="UniProtKB-KW"/>
</dbReference>
<dbReference type="GO" id="GO:0039580">
    <property type="term" value="P:symbiont-mediated suppression of host PKR/eIFalpha signaling"/>
    <property type="evidence" value="ECO:0007669"/>
    <property type="project" value="UniProtKB-KW"/>
</dbReference>
<dbReference type="GO" id="GO:0039502">
    <property type="term" value="P:symbiont-mediated suppression of host type I interferon-mediated signaling pathway"/>
    <property type="evidence" value="ECO:0007669"/>
    <property type="project" value="UniProtKB-KW"/>
</dbReference>
<dbReference type="FunFam" id="1.10.287.10:FF:000001">
    <property type="entry name" value="Non-structural protein 1"/>
    <property type="match status" value="1"/>
</dbReference>
<dbReference type="FunFam" id="3.30.420.330:FF:000001">
    <property type="entry name" value="Non-structural protein 1"/>
    <property type="match status" value="1"/>
</dbReference>
<dbReference type="Gene3D" id="3.30.420.330">
    <property type="entry name" value="Influenza virus non-structural protein, effector domain"/>
    <property type="match status" value="1"/>
</dbReference>
<dbReference type="Gene3D" id="1.10.287.10">
    <property type="entry name" value="S15/NS1, RNA-binding"/>
    <property type="match status" value="1"/>
</dbReference>
<dbReference type="HAMAP" id="MF_04066">
    <property type="entry name" value="INFV_NS1"/>
    <property type="match status" value="1"/>
</dbReference>
<dbReference type="InterPro" id="IPR004208">
    <property type="entry name" value="NS1"/>
</dbReference>
<dbReference type="InterPro" id="IPR000256">
    <property type="entry name" value="NS1A"/>
</dbReference>
<dbReference type="InterPro" id="IPR038064">
    <property type="entry name" value="NS1A_effect_dom-like_sf"/>
</dbReference>
<dbReference type="InterPro" id="IPR009068">
    <property type="entry name" value="uS15_NS1_RNA-bd_sf"/>
</dbReference>
<dbReference type="Pfam" id="PF00600">
    <property type="entry name" value="Flu_NS1"/>
    <property type="match status" value="1"/>
</dbReference>
<dbReference type="SUPFAM" id="SSF143021">
    <property type="entry name" value="Ns1 effector domain-like"/>
    <property type="match status" value="1"/>
</dbReference>
<dbReference type="SUPFAM" id="SSF47060">
    <property type="entry name" value="S15/NS1 RNA-binding domain"/>
    <property type="match status" value="1"/>
</dbReference>
<comment type="function">
    <text evidence="1">Inhibits post-transcriptional processing of cellular pre-mRNA, by binding and inhibiting two cellular proteins that are required for the 3'-end processing of cellular pre-mRNAs: the 30 kDa cleavage and polyadenylation specificity factor/CPSF4 and the poly(A)-binding protein 2/PABPN1. In turn, unprocessed 3' end pre-mRNAs accumulate in the host nucleus and are no longer exported to the cytoplasm. Cellular protein synthesis is thereby shut off very early after virus infection. Viral protein synthesis is not affected by the inhibition of the cellular 3' end processing machinery because the poly(A) tails of viral mRNAs are produced by the viral polymerase through a stuttering mechanism. Prevents the establishment of the cellular antiviral state by inhibiting TRIM25-mediated RIGI ubiquitination, which normally triggers the antiviral transduction signal that leads to the activation of type I IFN genes by transcription factors IRF3 and IRF7. Also binds poly(A) and U6 snRNA. Inhibits the integrated stress response (ISR) in the infected cell by blocking dsRNA binding by EIF2AK2/PKR and further phosphorylation of EIF2S1/EIF-2ALPHA. Stress granule formation is thus inhibited, which allows protein synthesis and viral replication.</text>
</comment>
<comment type="subunit">
    <text evidence="1">Homodimer. Interacts with host TRIM25 (via coiled coil); this interaction specifically inhibits TRIM25 multimerization and TRIM25-mediated RIGI CARD ubiquitination. Interacts with human EIF2AK2/PKR, CPSF4, IVNS1ABP and PABPN1.</text>
</comment>
<comment type="subcellular location">
    <subcellularLocation>
        <location evidence="1">Host nucleus</location>
    </subcellularLocation>
    <subcellularLocation>
        <location evidence="1">Host cytoplasm</location>
    </subcellularLocation>
    <text evidence="1">In uninfected, transfected cells, NS1 is localized in the nucleus. Only in virus infected cells, the nuclear export signal is unveiled, presumably by a viral protein, and a fraction of NS1 is exported in the cytoplasm.</text>
</comment>
<comment type="alternative products">
    <event type="alternative splicing"/>
    <isoform>
        <id>P08278-1</id>
        <name>NS1</name>
        <sequence type="displayed"/>
    </isoform>
    <isoform>
        <id>P08279-1</id>
        <name>NEP</name>
        <name>NS2</name>
        <sequence type="external"/>
    </isoform>
</comment>
<comment type="domain">
    <text evidence="1">The dsRNA-binding region is required for suppression of RNA silencing.</text>
</comment>
<comment type="PTM">
    <text evidence="1">Upon interferon induction, ISGylated via host HERC5; this results in the impairment of NS1 interaction with RNA targets due to its inability to form homodimers and to interact with host EIF2AK2/PKR.</text>
</comment>
<comment type="similarity">
    <text evidence="1">Belongs to the influenza A viruses NS1 family.</text>
</comment>
<organismHost>
    <name type="scientific">Aves</name>
    <dbReference type="NCBI Taxonomy" id="8782"/>
</organismHost>
<reference key="1">
    <citation type="journal article" date="1987" name="Virology">
        <title>Genetic divergence of the NS genes of avian influenza viruses.</title>
        <authorList>
            <person name="Nakajima K."/>
            <person name="Nobusawa E."/>
            <person name="Ogawa T."/>
            <person name="Nakajima S."/>
        </authorList>
    </citation>
    <scope>NUCLEOTIDE SEQUENCE [GENOMIC RNA]</scope>
</reference>
<reference key="2">
    <citation type="submission" date="1987-07" db="EMBL/GenBank/DDBJ databases">
        <authorList>
            <person name="Nakajima K."/>
        </authorList>
    </citation>
    <scope>SEQUENCE REVISION TO 67</scope>
</reference>
<reference key="3">
    <citation type="journal article" date="2003" name="Virology">
        <title>Intracellular warfare between human influenza viruses and human cells: the roles of the viral NS1 protein.</title>
        <authorList>
            <person name="Krug R.M."/>
            <person name="Yuan W."/>
            <person name="Noah D.L."/>
            <person name="Latham A.G."/>
        </authorList>
    </citation>
    <scope>REVIEW</scope>
</reference>
<name>NS1_I61A0</name>
<feature type="chain" id="PRO_0000078950" description="Non-structural protein 1">
    <location>
        <begin position="1" status="less than"/>
        <end position="227"/>
    </location>
</feature>
<feature type="region of interest" description="CPSF4-binding" evidence="1">
    <location>
        <begin position="177"/>
        <end position="212"/>
    </location>
</feature>
<feature type="region of interest" description="Disordered" evidence="2">
    <location>
        <begin position="206"/>
        <end position="227"/>
    </location>
</feature>
<feature type="region of interest" description="PABPN1-binding" evidence="1">
    <location>
        <begin position="220"/>
        <end position="227"/>
    </location>
</feature>
<feature type="short sequence motif" description="Nuclear localization signal" evidence="1">
    <location>
        <begin position="31"/>
        <end position="35"/>
    </location>
</feature>
<feature type="short sequence motif" description="Nuclear export signal" evidence="1">
    <location>
        <begin position="134"/>
        <end position="143"/>
    </location>
</feature>
<feature type="non-terminal residue">
    <location>
        <position position="1"/>
    </location>
</feature>
<proteinExistence type="inferred from homology"/>
<accession>P08278</accession>